<evidence type="ECO:0000250" key="1">
    <source>
        <dbReference type="UniProtKB" id="Q4WZB3"/>
    </source>
</evidence>
<evidence type="ECO:0000250" key="2">
    <source>
        <dbReference type="UniProtKB" id="Q93NG6"/>
    </source>
</evidence>
<evidence type="ECO:0000256" key="3">
    <source>
        <dbReference type="SAM" id="MobiDB-lite"/>
    </source>
</evidence>
<evidence type="ECO:0000269" key="4">
    <source>
    </source>
</evidence>
<evidence type="ECO:0000269" key="5">
    <source>
    </source>
</evidence>
<evidence type="ECO:0000303" key="6">
    <source>
    </source>
</evidence>
<evidence type="ECO:0000305" key="7"/>
<evidence type="ECO:0000305" key="8">
    <source>
    </source>
</evidence>
<evidence type="ECO:0000305" key="9">
    <source>
    </source>
</evidence>
<proteinExistence type="inferred from homology"/>
<reference key="1">
    <citation type="journal article" date="2019" name="Org. Lett.">
        <title>Targeted gene inactivations expose silent cytochalasans in Magnaporthe grisea NI980.</title>
        <authorList>
            <person name="Wang C."/>
            <person name="Hantke V."/>
            <person name="Cox R.J."/>
            <person name="Skellam E."/>
        </authorList>
    </citation>
    <scope>NUCLEOTIDE SEQUENCE [GENOMIC DNA]</scope>
    <scope>FUNCTION</scope>
    <scope>PATHWAY</scope>
    <source>
        <strain>NI980</strain>
    </source>
</reference>
<reference key="2">
    <citation type="journal article" date="2019" name="Org. Lett.">
        <title>Investigating the function of cryptic cytochalasan cytochrome P450 monooxygenases using combinatorial biosynthesis.</title>
        <authorList>
            <person name="Wang C."/>
            <person name="Becker K."/>
            <person name="Pfuetze S."/>
            <person name="Kuhnert E."/>
            <person name="Stadler M."/>
            <person name="Cox R.J."/>
            <person name="Skellam E."/>
        </authorList>
    </citation>
    <scope>FUNCTION</scope>
</reference>
<reference key="3">
    <citation type="journal article" date="2020" name="Chem. Commun. (Camb.)">
        <title>Evidence for enzyme catalysed intramolecular [4+2] Diels-Alder cyclization during the biosynthesis of pyrichalasin H.</title>
        <authorList>
            <person name="Hantke V."/>
            <person name="Skellam E.J."/>
            <person name="Cox R.J."/>
        </authorList>
    </citation>
    <scope>FUNCTION</scope>
</reference>
<gene>
    <name evidence="6" type="primary">pyiE</name>
</gene>
<organism>
    <name type="scientific">Pyricularia grisea</name>
    <name type="common">Crabgrass-specific blast fungus</name>
    <name type="synonym">Magnaporthe grisea</name>
    <dbReference type="NCBI Taxonomy" id="148305"/>
    <lineage>
        <taxon>Eukaryota</taxon>
        <taxon>Fungi</taxon>
        <taxon>Dikarya</taxon>
        <taxon>Ascomycota</taxon>
        <taxon>Pezizomycotina</taxon>
        <taxon>Sordariomycetes</taxon>
        <taxon>Sordariomycetidae</taxon>
        <taxon>Magnaporthales</taxon>
        <taxon>Pyriculariaceae</taxon>
        <taxon>Pyricularia</taxon>
    </lineage>
</organism>
<comment type="function">
    <text evidence="4 5 8">Hydrolyase; part of the gene cluster that mediates the biosynthesis of the mycotoxin pyrichalasin H, a tyrosine-derived cytochalasan that inhibits the growth of rice seedlings, but also inhibits lymphocyte capping and actin polymerization and alters cell morphology (Probable) (PubMed:31099577). Pyrichalasin H is indicated as the responsible agent for the genus-specific pathogenicity of M.grisea toward crabgrass (PubMed:31099577). The first step in the pathway is catalyzed by the O-methyltransferase pyiA which methylates free tyrosine to generate the precursor O-methyltyrosine (PubMed:31099577). The hybrid PKS-NRPS pyiS, assisted by the enoyl reductase pyiC, are responsible for fusion of the O-methyltyrosine precursor and the polyketide backbone (PubMed:31099577). The polyketide synthase module (PKS) of pyiS is responsible for the synthesis of the polyketide backbone and the downstream nonribosomal peptide synthetase (NRPS) amidates the carboxyl end of the polyketide with the O-methyltyrosine precursor (PubMed:31099577). As the NRPS A-domain demonstrates substrate tolerance, pyiS can also use phenylalanine, tyrosine and even para-chlorophenylalanine as amino acid precursor, which leads to the production of novel cytochalasans, including halogenated cytochalasans (PubMed:31099577). Because pyiS lacks a designated enoylreductase (ER) domain, the required activity is provided the enoyl reductase pyiC (PubMed:31099577). Reduction by the hydrolyase pyiE leads to 1,5-dihydropyrrolone, which is substrate for dehydration and intra-molecular Diels-Alder cyclization by the Diels-Alderase pyiF to yield the required isoindolone-fused macrocycle (PubMed:32039410). The tailoring cytochrome P450 monooxygenases piyD and piyG catalyze the hydroxylation at C-18 and C-7, respectivily, whereas the short-chain dehydrogenase/reductase pyiH reduces the carbonyl at C-21 in preparation for the transfer of an acetyl group by the acetyltransferase pyiB (PubMed:31099577). These 3 reactions whose order is not clear yet, lead to the production of O-methylpyrichalasin J, a deacetylated pyrichalasin H (PubMed:31099577). Finally, pyiB to converts O-methylpyrichalasin J into the final product pyrichalasin H via acetylation of C-21 (PubMed:31099577).</text>
</comment>
<comment type="pathway">
    <text evidence="5">Mycotoxin biosynthesis.</text>
</comment>
<comment type="subunit">
    <text evidence="2">Homodimer.</text>
</comment>
<comment type="similarity">
    <text evidence="7">Belongs to the AB hydrolase superfamily. FUS2 hydrolase family.</text>
</comment>
<protein>
    <recommendedName>
        <fullName evidence="6">Hydrolase pyiE</fullName>
        <ecNumber evidence="9">3.7.1.-</ecNumber>
    </recommendedName>
    <alternativeName>
        <fullName evidence="6">Pyrichalasin H biosynthesis cluster protein E</fullName>
    </alternativeName>
</protein>
<keyword id="KW-0378">Hydrolase</keyword>
<keyword id="KW-1185">Reference proteome</keyword>
<dbReference type="EC" id="3.7.1.-" evidence="9"/>
<dbReference type="EMBL" id="MK801691">
    <property type="protein sequence ID" value="QCS37512.1"/>
    <property type="molecule type" value="Genomic_DNA"/>
</dbReference>
<dbReference type="SMR" id="A0A4P8W7Y2"/>
<dbReference type="ESTHER" id="maggr-pyie">
    <property type="family name" value="Duf_1100-S"/>
</dbReference>
<dbReference type="Proteomes" id="UP000515153">
    <property type="component" value="Unplaced"/>
</dbReference>
<dbReference type="GO" id="GO:0016787">
    <property type="term" value="F:hydrolase activity"/>
    <property type="evidence" value="ECO:0007669"/>
    <property type="project" value="UniProtKB-KW"/>
</dbReference>
<dbReference type="Gene3D" id="1.20.1440.110">
    <property type="entry name" value="acylaminoacyl peptidase"/>
    <property type="match status" value="1"/>
</dbReference>
<dbReference type="Gene3D" id="3.40.50.1820">
    <property type="entry name" value="alpha/beta hydrolase"/>
    <property type="match status" value="1"/>
</dbReference>
<dbReference type="InterPro" id="IPR000073">
    <property type="entry name" value="AB_hydrolase_1"/>
</dbReference>
<dbReference type="InterPro" id="IPR029058">
    <property type="entry name" value="AB_hydrolase_fold"/>
</dbReference>
<dbReference type="InterPro" id="IPR050261">
    <property type="entry name" value="FrsA_esterase"/>
</dbReference>
<dbReference type="PANTHER" id="PTHR22946:SF13">
    <property type="entry name" value="ALPHA_BETA HYDROLASE PSOB"/>
    <property type="match status" value="1"/>
</dbReference>
<dbReference type="PANTHER" id="PTHR22946">
    <property type="entry name" value="DIENELACTONE HYDROLASE DOMAIN-CONTAINING PROTEIN-RELATED"/>
    <property type="match status" value="1"/>
</dbReference>
<dbReference type="Pfam" id="PF12697">
    <property type="entry name" value="Abhydrolase_6"/>
    <property type="match status" value="1"/>
</dbReference>
<dbReference type="SUPFAM" id="SSF53474">
    <property type="entry name" value="alpha/beta-Hydrolases"/>
    <property type="match status" value="1"/>
</dbReference>
<name>PYIE_PYRGI</name>
<feature type="chain" id="PRO_0000449475" description="Hydrolase pyiE">
    <location>
        <begin position="1"/>
        <end position="463"/>
    </location>
</feature>
<feature type="region of interest" description="Disordered" evidence="3">
    <location>
        <begin position="350"/>
        <end position="373"/>
    </location>
</feature>
<feature type="active site" description="Nucleophile" evidence="1">
    <location>
        <position position="252"/>
    </location>
</feature>
<sequence length="463" mass="50233">MHKFFPRSGFFDFETVRILGTACYGGADVAEVLEAVGEIKSDDAASWEEAWRRQSWWAEALADQAREGGDREAARRAYLRASNYARASGYMYVSDLGAEGGNAPPTQDPRALPVAEKVGRLFRKALALMEGEVRALSIPCGAQALPGLLYLPPPGKRIPGRDKIPVLVFLGGADSCQEELYYLYPAAGPGLGYAVLTFDGPGQGIVLRKHGLRVRPDWEVVTSSVLDYLEAYSAQHPGLELDMKAIAVSGASMGGYYALRSAVDRRVKACVSIDPFYDMWDFGTAHVSPLFISAWTSGIISSGFVDKLMTVVSRLWFQMKWEIALTGTLFGLSSPSQILLNMKNYTLSGKSDGSRANGKKSHSPTDGGGVESDSFLSEVRCPVFLSGAGKSLYLDVDSHTRRCYDGLTGVAAKDKELWVPESEGQGSLQAKMGALALCNQKTFQFLDKVLGVQRVPLDVSAHI</sequence>
<accession>A0A4P8W7Y2</accession>